<gene>
    <name type="primary">MT-ND4</name>
    <name type="synonym">MTND4</name>
    <name type="synonym">NADH4</name>
    <name type="synonym">ND4</name>
</gene>
<reference key="1">
    <citation type="journal article" date="1999" name="Gene">
        <title>The complete mitochondrial DNA sequence of the Atlantic salmon, Salmo salar.</title>
        <authorList>
            <person name="Hurst C.D."/>
            <person name="Bartlett S.E."/>
            <person name="Davidson W.S."/>
            <person name="Bruce I.J."/>
        </authorList>
    </citation>
    <scope>NUCLEOTIDE SEQUENCE [GENOMIC DNA]</scope>
    <source>
        <tissue>Liver</tissue>
    </source>
</reference>
<reference key="2">
    <citation type="submission" date="1999-03" db="EMBL/GenBank/DDBJ databases">
        <title>The complete mitochondrial genome sequence of a teleost, Salmo salar, and comparisons with other salmoniformes.</title>
        <authorList>
            <person name="Arnason U."/>
            <person name="Johnsson E."/>
            <person name="Rasmussen A.S."/>
        </authorList>
    </citation>
    <scope>NUCLEOTIDE SEQUENCE [GENOMIC DNA]</scope>
</reference>
<geneLocation type="mitochondrion"/>
<comment type="function">
    <text evidence="1">Core subunit of the mitochondrial membrane respiratory chain NADH dehydrogenase (Complex I) that is believed to belong to the minimal assembly required for catalysis. Complex I functions in the transfer of electrons from NADH to the respiratory chain. The immediate electron acceptor for the enzyme is believed to be ubiquinone (By similarity).</text>
</comment>
<comment type="catalytic activity">
    <reaction>
        <text>a ubiquinone + NADH + 5 H(+)(in) = a ubiquinol + NAD(+) + 4 H(+)(out)</text>
        <dbReference type="Rhea" id="RHEA:29091"/>
        <dbReference type="Rhea" id="RHEA-COMP:9565"/>
        <dbReference type="Rhea" id="RHEA-COMP:9566"/>
        <dbReference type="ChEBI" id="CHEBI:15378"/>
        <dbReference type="ChEBI" id="CHEBI:16389"/>
        <dbReference type="ChEBI" id="CHEBI:17976"/>
        <dbReference type="ChEBI" id="CHEBI:57540"/>
        <dbReference type="ChEBI" id="CHEBI:57945"/>
        <dbReference type="EC" id="7.1.1.2"/>
    </reaction>
</comment>
<comment type="subcellular location">
    <subcellularLocation>
        <location evidence="1">Mitochondrion membrane</location>
        <topology evidence="1">Multi-pass membrane protein</topology>
    </subcellularLocation>
</comment>
<comment type="similarity">
    <text evidence="3">Belongs to the complex I subunit 4 family.</text>
</comment>
<sequence length="460" mass="51552">MLKILIPTLMLFPTIWFSPAKWLWTTSIAQSLVIALASLSWLKWSSETGWSSSNLYLATDPLSTPLLVLTCWLLPLMVLASQNHISPEPLNRQRTYISLLVSLQMFLILAFGATEIIMFYIMFEATLLPTLIIITRWGNQTERLNAGTYFLFYTLAGSLPLLVALLLLQNDSGTLSMFTLQYTQPMHLLTWGNKLWWAACLLAFLVKMPVYGVHLWLPKAHVEAPIAGSMILAAVLLKLGGYGMMRMMVMLDPLTKELAYPFIVLALWGIIMTGSICLRQTDLKSLIAYSSVGHMGLVAGGILIQTPWGFTGAIILMIAHGLASSALFCLANTSYERTHSRTMLLARGMQMILPLMTTWWFVASLANLALPPLPNLMGELMIITSMFNWSHWTLLLTGLGTLITASYSLYLFLMTQRGPLPSHIIALEPTHTREHLLITLHLIPIILLILKPELMWGWCF</sequence>
<keyword id="KW-0249">Electron transport</keyword>
<keyword id="KW-0472">Membrane</keyword>
<keyword id="KW-0496">Mitochondrion</keyword>
<keyword id="KW-0520">NAD</keyword>
<keyword id="KW-1185">Reference proteome</keyword>
<keyword id="KW-0679">Respiratory chain</keyword>
<keyword id="KW-1278">Translocase</keyword>
<keyword id="KW-0812">Transmembrane</keyword>
<keyword id="KW-1133">Transmembrane helix</keyword>
<keyword id="KW-0813">Transport</keyword>
<keyword id="KW-0830">Ubiquinone</keyword>
<feature type="chain" id="PRO_0000117984" description="NADH-ubiquinone oxidoreductase chain 4">
    <location>
        <begin position="1"/>
        <end position="460"/>
    </location>
</feature>
<feature type="transmembrane region" description="Helical" evidence="2">
    <location>
        <begin position="20"/>
        <end position="42"/>
    </location>
</feature>
<feature type="transmembrane region" description="Helical" evidence="2">
    <location>
        <begin position="61"/>
        <end position="81"/>
    </location>
</feature>
<feature type="transmembrane region" description="Helical" evidence="2">
    <location>
        <begin position="94"/>
        <end position="113"/>
    </location>
</feature>
<feature type="transmembrane region" description="Helical" evidence="2">
    <location>
        <begin position="117"/>
        <end position="139"/>
    </location>
</feature>
<feature type="transmembrane region" description="Helical" evidence="2">
    <location>
        <begin position="148"/>
        <end position="168"/>
    </location>
</feature>
<feature type="transmembrane region" description="Helical" evidence="2">
    <location>
        <begin position="195"/>
        <end position="215"/>
    </location>
</feature>
<feature type="transmembrane region" description="Helical" evidence="2">
    <location>
        <begin position="225"/>
        <end position="245"/>
    </location>
</feature>
<feature type="transmembrane region" description="Helical" evidence="2">
    <location>
        <begin position="258"/>
        <end position="278"/>
    </location>
</feature>
<feature type="transmembrane region" description="Helical" evidence="2">
    <location>
        <begin position="285"/>
        <end position="304"/>
    </location>
</feature>
<feature type="transmembrane region" description="Helical" evidence="2">
    <location>
        <begin position="308"/>
        <end position="330"/>
    </location>
</feature>
<feature type="transmembrane region" description="Helical" evidence="2">
    <location>
        <begin position="351"/>
        <end position="371"/>
    </location>
</feature>
<feature type="transmembrane region" description="Helical" evidence="2">
    <location>
        <begin position="394"/>
        <end position="414"/>
    </location>
</feature>
<feature type="transmembrane region" description="Helical" evidence="2">
    <location>
        <begin position="436"/>
        <end position="456"/>
    </location>
</feature>
<feature type="sequence conflict" description="In Ref. 2; AAF61387." evidence="3" ref="2">
    <original>N</original>
    <variation>D</variation>
    <location>
        <position position="193"/>
    </location>
</feature>
<feature type="sequence conflict" description="In Ref. 2; AAF61387." evidence="3" ref="2">
    <original>V</original>
    <variation>L</variation>
    <location>
        <position position="210"/>
    </location>
</feature>
<feature type="sequence conflict" description="In Ref. 2; AAF61387." evidence="3" ref="2">
    <original>L</original>
    <variation>V</variation>
    <location>
        <position position="353"/>
    </location>
</feature>
<proteinExistence type="inferred from homology"/>
<evidence type="ECO:0000250" key="1"/>
<evidence type="ECO:0000255" key="2"/>
<evidence type="ECO:0000305" key="3"/>
<accession>Q9ZZM4</accession>
<accession>Q9MPG7</accession>
<dbReference type="EC" id="7.1.1.2"/>
<dbReference type="EMBL" id="U12143">
    <property type="protein sequence ID" value="AAD04742.1"/>
    <property type="molecule type" value="Genomic_DNA"/>
</dbReference>
<dbReference type="EMBL" id="AF133701">
    <property type="protein sequence ID" value="AAF61387.1"/>
    <property type="molecule type" value="Genomic_DNA"/>
</dbReference>
<dbReference type="PIR" id="T09956">
    <property type="entry name" value="T09956"/>
</dbReference>
<dbReference type="RefSeq" id="NP_008454.1">
    <property type="nucleotide sequence ID" value="NC_001960.1"/>
</dbReference>
<dbReference type="SMR" id="Q9ZZM4"/>
<dbReference type="STRING" id="8030.ENSSSAP00000000011"/>
<dbReference type="PaxDb" id="8030-ENSSSAP00000000011"/>
<dbReference type="GeneID" id="808305"/>
<dbReference type="KEGG" id="sasa:808305"/>
<dbReference type="CTD" id="4538"/>
<dbReference type="Proteomes" id="UP000087266">
    <property type="component" value="Mitochondrion MT"/>
</dbReference>
<dbReference type="Bgee" id="ENSSSAG00000000029">
    <property type="expression patterns" value="Expressed in mesonephros and 24 other cell types or tissues"/>
</dbReference>
<dbReference type="GO" id="GO:0031966">
    <property type="term" value="C:mitochondrial membrane"/>
    <property type="evidence" value="ECO:0007669"/>
    <property type="project" value="UniProtKB-SubCell"/>
</dbReference>
<dbReference type="GO" id="GO:0008137">
    <property type="term" value="F:NADH dehydrogenase (ubiquinone) activity"/>
    <property type="evidence" value="ECO:0007669"/>
    <property type="project" value="UniProtKB-EC"/>
</dbReference>
<dbReference type="GO" id="GO:0048039">
    <property type="term" value="F:ubiquinone binding"/>
    <property type="evidence" value="ECO:0007669"/>
    <property type="project" value="TreeGrafter"/>
</dbReference>
<dbReference type="GO" id="GO:0042773">
    <property type="term" value="P:ATP synthesis coupled electron transport"/>
    <property type="evidence" value="ECO:0007669"/>
    <property type="project" value="InterPro"/>
</dbReference>
<dbReference type="GO" id="GO:0015990">
    <property type="term" value="P:electron transport coupled proton transport"/>
    <property type="evidence" value="ECO:0007669"/>
    <property type="project" value="TreeGrafter"/>
</dbReference>
<dbReference type="InterPro" id="IPR000260">
    <property type="entry name" value="NADH4_N"/>
</dbReference>
<dbReference type="InterPro" id="IPR010227">
    <property type="entry name" value="NADH_Q_OxRdtase_chainM/4"/>
</dbReference>
<dbReference type="InterPro" id="IPR003918">
    <property type="entry name" value="NADH_UbQ_OxRdtase"/>
</dbReference>
<dbReference type="InterPro" id="IPR001750">
    <property type="entry name" value="ND/Mrp_TM"/>
</dbReference>
<dbReference type="NCBIfam" id="TIGR01972">
    <property type="entry name" value="NDH_I_M"/>
    <property type="match status" value="1"/>
</dbReference>
<dbReference type="PANTHER" id="PTHR43507">
    <property type="entry name" value="NADH-UBIQUINONE OXIDOREDUCTASE CHAIN 4"/>
    <property type="match status" value="1"/>
</dbReference>
<dbReference type="PANTHER" id="PTHR43507:SF20">
    <property type="entry name" value="NADH-UBIQUINONE OXIDOREDUCTASE CHAIN 4"/>
    <property type="match status" value="1"/>
</dbReference>
<dbReference type="Pfam" id="PF01059">
    <property type="entry name" value="Oxidored_q5_N"/>
    <property type="match status" value="1"/>
</dbReference>
<dbReference type="Pfam" id="PF00361">
    <property type="entry name" value="Proton_antipo_M"/>
    <property type="match status" value="1"/>
</dbReference>
<dbReference type="PRINTS" id="PR01437">
    <property type="entry name" value="NUOXDRDTASE4"/>
</dbReference>
<name>NU4M_SALSA</name>
<organism>
    <name type="scientific">Salmo salar</name>
    <name type="common">Atlantic salmon</name>
    <dbReference type="NCBI Taxonomy" id="8030"/>
    <lineage>
        <taxon>Eukaryota</taxon>
        <taxon>Metazoa</taxon>
        <taxon>Chordata</taxon>
        <taxon>Craniata</taxon>
        <taxon>Vertebrata</taxon>
        <taxon>Euteleostomi</taxon>
        <taxon>Actinopterygii</taxon>
        <taxon>Neopterygii</taxon>
        <taxon>Teleostei</taxon>
        <taxon>Protacanthopterygii</taxon>
        <taxon>Salmoniformes</taxon>
        <taxon>Salmonidae</taxon>
        <taxon>Salmoninae</taxon>
        <taxon>Salmo</taxon>
    </lineage>
</organism>
<protein>
    <recommendedName>
        <fullName>NADH-ubiquinone oxidoreductase chain 4</fullName>
        <ecNumber>7.1.1.2</ecNumber>
    </recommendedName>
    <alternativeName>
        <fullName>NADH dehydrogenase subunit 4</fullName>
    </alternativeName>
</protein>